<dbReference type="EC" id="5.4.3.8"/>
<dbReference type="EMBL" id="L77117">
    <property type="protein sequence ID" value="AAB98593.1"/>
    <property type="status" value="ALT_INIT"/>
    <property type="molecule type" value="Genomic_DNA"/>
</dbReference>
<dbReference type="PIR" id="C64375">
    <property type="entry name" value="C64375"/>
</dbReference>
<dbReference type="RefSeq" id="WP_064496557.1">
    <property type="nucleotide sequence ID" value="NC_000909.1"/>
</dbReference>
<dbReference type="SMR" id="Q58020"/>
<dbReference type="FunCoup" id="Q58020">
    <property type="interactions" value="176"/>
</dbReference>
<dbReference type="STRING" id="243232.MJ_0603"/>
<dbReference type="PaxDb" id="243232-MJ_0603"/>
<dbReference type="EnsemblBacteria" id="AAB98593">
    <property type="protein sequence ID" value="AAB98593"/>
    <property type="gene ID" value="MJ_0603"/>
</dbReference>
<dbReference type="GeneID" id="1451468"/>
<dbReference type="KEGG" id="mja:MJ_0603"/>
<dbReference type="eggNOG" id="arCOG00918">
    <property type="taxonomic scope" value="Archaea"/>
</dbReference>
<dbReference type="HOGENOM" id="CLU_016922_1_5_2"/>
<dbReference type="InParanoid" id="Q58020"/>
<dbReference type="OrthoDB" id="6524at2157"/>
<dbReference type="PhylomeDB" id="Q58020"/>
<dbReference type="UniPathway" id="UPA00251">
    <property type="reaction ID" value="UER00317"/>
</dbReference>
<dbReference type="Proteomes" id="UP000000805">
    <property type="component" value="Chromosome"/>
</dbReference>
<dbReference type="GO" id="GO:0005737">
    <property type="term" value="C:cytoplasm"/>
    <property type="evidence" value="ECO:0007669"/>
    <property type="project" value="UniProtKB-SubCell"/>
</dbReference>
<dbReference type="GO" id="GO:0042286">
    <property type="term" value="F:glutamate-1-semialdehyde 2,1-aminomutase activity"/>
    <property type="evidence" value="ECO:0007669"/>
    <property type="project" value="UniProtKB-UniRule"/>
</dbReference>
<dbReference type="GO" id="GO:0030170">
    <property type="term" value="F:pyridoxal phosphate binding"/>
    <property type="evidence" value="ECO:0007669"/>
    <property type="project" value="InterPro"/>
</dbReference>
<dbReference type="GO" id="GO:0008483">
    <property type="term" value="F:transaminase activity"/>
    <property type="evidence" value="ECO:0007669"/>
    <property type="project" value="InterPro"/>
</dbReference>
<dbReference type="GO" id="GO:0006782">
    <property type="term" value="P:protoporphyrinogen IX biosynthetic process"/>
    <property type="evidence" value="ECO:0007669"/>
    <property type="project" value="UniProtKB-UniRule"/>
</dbReference>
<dbReference type="CDD" id="cd00610">
    <property type="entry name" value="OAT_like"/>
    <property type="match status" value="1"/>
</dbReference>
<dbReference type="FunFam" id="3.40.640.10:FF:000021">
    <property type="entry name" value="Glutamate-1-semialdehyde 2,1-aminomutase"/>
    <property type="match status" value="1"/>
</dbReference>
<dbReference type="Gene3D" id="3.90.1150.10">
    <property type="entry name" value="Aspartate Aminotransferase, domain 1"/>
    <property type="match status" value="1"/>
</dbReference>
<dbReference type="Gene3D" id="3.40.640.10">
    <property type="entry name" value="Type I PLP-dependent aspartate aminotransferase-like (Major domain)"/>
    <property type="match status" value="1"/>
</dbReference>
<dbReference type="HAMAP" id="MF_00375">
    <property type="entry name" value="HemL_aminotrans_3"/>
    <property type="match status" value="1"/>
</dbReference>
<dbReference type="InterPro" id="IPR004639">
    <property type="entry name" value="4pyrrol_synth_GluAld_NH2Trfase"/>
</dbReference>
<dbReference type="InterPro" id="IPR005814">
    <property type="entry name" value="Aminotrans_3"/>
</dbReference>
<dbReference type="InterPro" id="IPR049704">
    <property type="entry name" value="Aminotrans_3_PPA_site"/>
</dbReference>
<dbReference type="InterPro" id="IPR015424">
    <property type="entry name" value="PyrdxlP-dep_Trfase"/>
</dbReference>
<dbReference type="InterPro" id="IPR015421">
    <property type="entry name" value="PyrdxlP-dep_Trfase_major"/>
</dbReference>
<dbReference type="InterPro" id="IPR015422">
    <property type="entry name" value="PyrdxlP-dep_Trfase_small"/>
</dbReference>
<dbReference type="NCBIfam" id="TIGR00713">
    <property type="entry name" value="hemL"/>
    <property type="match status" value="1"/>
</dbReference>
<dbReference type="NCBIfam" id="NF000818">
    <property type="entry name" value="PRK00062.1"/>
    <property type="match status" value="1"/>
</dbReference>
<dbReference type="PANTHER" id="PTHR43713">
    <property type="entry name" value="GLUTAMATE-1-SEMIALDEHYDE 2,1-AMINOMUTASE"/>
    <property type="match status" value="1"/>
</dbReference>
<dbReference type="PANTHER" id="PTHR43713:SF3">
    <property type="entry name" value="GLUTAMATE-1-SEMIALDEHYDE 2,1-AMINOMUTASE 1, CHLOROPLASTIC-RELATED"/>
    <property type="match status" value="1"/>
</dbReference>
<dbReference type="Pfam" id="PF00202">
    <property type="entry name" value="Aminotran_3"/>
    <property type="match status" value="1"/>
</dbReference>
<dbReference type="SUPFAM" id="SSF53383">
    <property type="entry name" value="PLP-dependent transferases"/>
    <property type="match status" value="1"/>
</dbReference>
<dbReference type="PROSITE" id="PS00600">
    <property type="entry name" value="AA_TRANSFER_CLASS_3"/>
    <property type="match status" value="1"/>
</dbReference>
<comment type="catalytic activity">
    <reaction>
        <text>(S)-4-amino-5-oxopentanoate = 5-aminolevulinate</text>
        <dbReference type="Rhea" id="RHEA:14265"/>
        <dbReference type="ChEBI" id="CHEBI:57501"/>
        <dbReference type="ChEBI" id="CHEBI:356416"/>
        <dbReference type="EC" id="5.4.3.8"/>
    </reaction>
</comment>
<comment type="cofactor">
    <cofactor evidence="1">
        <name>pyridoxal 5'-phosphate</name>
        <dbReference type="ChEBI" id="CHEBI:597326"/>
    </cofactor>
</comment>
<comment type="pathway">
    <text>Porphyrin-containing compound metabolism; protoporphyrin-IX biosynthesis; 5-aminolevulinate from L-glutamyl-tRNA(Glu): step 2/2.</text>
</comment>
<comment type="subcellular location">
    <subcellularLocation>
        <location evidence="2">Cytoplasm</location>
    </subcellularLocation>
</comment>
<comment type="similarity">
    <text evidence="2">Belongs to the class-III pyridoxal-phosphate-dependent aminotransferase family. HemL subfamily.</text>
</comment>
<comment type="sequence caution" evidence="2">
    <conflict type="erroneous initiation">
        <sequence resource="EMBL-CDS" id="AAB98593"/>
    </conflict>
</comment>
<accession>Q58020</accession>
<protein>
    <recommendedName>
        <fullName>Glutamate-1-semialdehyde 2,1-aminomutase</fullName>
        <shortName>GSA</shortName>
        <ecNumber>5.4.3.8</ecNumber>
    </recommendedName>
    <alternativeName>
        <fullName>Glutamate-1-semialdehyde aminotransferase</fullName>
        <shortName>GSA-AT</shortName>
    </alternativeName>
</protein>
<evidence type="ECO:0000250" key="1"/>
<evidence type="ECO:0000305" key="2"/>
<gene>
    <name type="primary">hemL</name>
    <name type="ordered locus">MJ0603</name>
</gene>
<proteinExistence type="inferred from homology"/>
<feature type="chain" id="PRO_0000120482" description="Glutamate-1-semialdehyde 2,1-aminomutase">
    <location>
        <begin position="1"/>
        <end position="426"/>
    </location>
</feature>
<feature type="modified residue" description="N6-(pyridoxal phosphate)lysine" evidence="1">
    <location>
        <position position="266"/>
    </location>
</feature>
<reference key="1">
    <citation type="journal article" date="1996" name="Science">
        <title>Complete genome sequence of the methanogenic archaeon, Methanococcus jannaschii.</title>
        <authorList>
            <person name="Bult C.J."/>
            <person name="White O."/>
            <person name="Olsen G.J."/>
            <person name="Zhou L."/>
            <person name="Fleischmann R.D."/>
            <person name="Sutton G.G."/>
            <person name="Blake J.A."/>
            <person name="FitzGerald L.M."/>
            <person name="Clayton R.A."/>
            <person name="Gocayne J.D."/>
            <person name="Kerlavage A.R."/>
            <person name="Dougherty B.A."/>
            <person name="Tomb J.-F."/>
            <person name="Adams M.D."/>
            <person name="Reich C.I."/>
            <person name="Overbeek R."/>
            <person name="Kirkness E.F."/>
            <person name="Weinstock K.G."/>
            <person name="Merrick J.M."/>
            <person name="Glodek A."/>
            <person name="Scott J.L."/>
            <person name="Geoghagen N.S.M."/>
            <person name="Weidman J.F."/>
            <person name="Fuhrmann J.L."/>
            <person name="Nguyen D."/>
            <person name="Utterback T.R."/>
            <person name="Kelley J.M."/>
            <person name="Peterson J.D."/>
            <person name="Sadow P.W."/>
            <person name="Hanna M.C."/>
            <person name="Cotton M.D."/>
            <person name="Roberts K.M."/>
            <person name="Hurst M.A."/>
            <person name="Kaine B.P."/>
            <person name="Borodovsky M."/>
            <person name="Klenk H.-P."/>
            <person name="Fraser C.M."/>
            <person name="Smith H.O."/>
            <person name="Woese C.R."/>
            <person name="Venter J.C."/>
        </authorList>
    </citation>
    <scope>NUCLEOTIDE SEQUENCE [LARGE SCALE GENOMIC DNA]</scope>
    <source>
        <strain>ATCC 43067 / DSM 2661 / JAL-1 / JCM 10045 / NBRC 100440</strain>
    </source>
</reference>
<name>GSA_METJA</name>
<keyword id="KW-0963">Cytoplasm</keyword>
<keyword id="KW-0413">Isomerase</keyword>
<keyword id="KW-0627">Porphyrin biosynthesis</keyword>
<keyword id="KW-0663">Pyridoxal phosphate</keyword>
<keyword id="KW-1185">Reference proteome</keyword>
<organism>
    <name type="scientific">Methanocaldococcus jannaschii (strain ATCC 43067 / DSM 2661 / JAL-1 / JCM 10045 / NBRC 100440)</name>
    <name type="common">Methanococcus jannaschii</name>
    <dbReference type="NCBI Taxonomy" id="243232"/>
    <lineage>
        <taxon>Archaea</taxon>
        <taxon>Methanobacteriati</taxon>
        <taxon>Methanobacteriota</taxon>
        <taxon>Methanomada group</taxon>
        <taxon>Methanococci</taxon>
        <taxon>Methanococcales</taxon>
        <taxon>Methanocaldococcaceae</taxon>
        <taxon>Methanocaldococcus</taxon>
    </lineage>
</organism>
<sequence length="426" mass="47451">MALKMDKSKELFEEAKKYLVGGVNSPVRYFKPYPFFVEKAKDCYLFDVDGNCYIDYCLAYGPMVLGHANDAVIKAVKEQLELGSAYGCPTEKEIILAKEVVKRVPCAEMVRFVNSGTEATMSAIRLARGVTGRKKIIKFDGAYHGAHDYVLVKSGSGALTHGHPNSPGIPEETTKNTILIPFNDEDAVKKAINENKDEIACIIVEPIMGNVGCILPKEGYLEFLREITEENDILLIFDEVITGFRLAKGGAQEYFGVVPDIATLGKILGGGFPIGAIVGRRELMEQFSPLGAIYQAGTFNGNPISITAGIATLKQLDDRFYKETARTAKILADTLRELADKHNIKAKVYNIASMFQIYFNDKEVVNYEIAKQSDTEKFMKYFWRLLEKGVFVPPSQFECCFTSIKHDDEVVDKTIKAMEDVFEGLE</sequence>